<sequence>MRFEHENLPQRIXFG</sequence>
<reference key="1">
    <citation type="journal article" date="1998" name="J. Bacteriol.">
        <title>Characterization of the maleylacetate reductase MacA of Rhodococcus opacus 1CP and evidence for the presence of an isofunctional enzyme.</title>
        <authorList>
            <person name="Seibert V."/>
            <person name="Kourbatova E.M."/>
            <person name="Golovleva L.A."/>
            <person name="Schloemann M."/>
        </authorList>
    </citation>
    <scope>PROTEIN SEQUENCE</scope>
    <source>
        <strain>1CP</strain>
    </source>
</reference>
<protein>
    <recommendedName>
        <fullName>Putative maleylacetate reductase 2</fullName>
        <ecNumber>1.3.1.32</ecNumber>
    </recommendedName>
    <alternativeName>
        <fullName>maleylacetate reductase II</fullName>
    </alternativeName>
</protein>
<comment type="catalytic activity">
    <reaction>
        <text>3-oxoadipate + NAD(+) = maleylacetate + NADH + H(+)</text>
        <dbReference type="Rhea" id="RHEA:16981"/>
        <dbReference type="ChEBI" id="CHEBI:15378"/>
        <dbReference type="ChEBI" id="CHEBI:15775"/>
        <dbReference type="ChEBI" id="CHEBI:16468"/>
        <dbReference type="ChEBI" id="CHEBI:57540"/>
        <dbReference type="ChEBI" id="CHEBI:57945"/>
        <dbReference type="EC" id="1.3.1.32"/>
    </reaction>
</comment>
<comment type="catalytic activity">
    <reaction>
        <text>3-oxoadipate + NADP(+) = maleylacetate + NADPH + H(+)</text>
        <dbReference type="Rhea" id="RHEA:16985"/>
        <dbReference type="ChEBI" id="CHEBI:15378"/>
        <dbReference type="ChEBI" id="CHEBI:15775"/>
        <dbReference type="ChEBI" id="CHEBI:16468"/>
        <dbReference type="ChEBI" id="CHEBI:57783"/>
        <dbReference type="ChEBI" id="CHEBI:58349"/>
        <dbReference type="EC" id="1.3.1.32"/>
    </reaction>
</comment>
<comment type="pathway">
    <text>Aromatic compound metabolism; 3-chlorocatechol degradation.</text>
</comment>
<comment type="similarity">
    <text evidence="1">Belongs to the iron-containing alcohol dehydrogenase family.</text>
</comment>
<proteinExistence type="evidence at protein level"/>
<evidence type="ECO:0000305" key="1"/>
<keyword id="KW-0058">Aromatic hydrocarbons catabolism</keyword>
<keyword id="KW-0903">Direct protein sequencing</keyword>
<keyword id="KW-0520">NAD</keyword>
<keyword id="KW-0560">Oxidoreductase</keyword>
<accession>P56870</accession>
<name>MACA2_RHOOP</name>
<feature type="chain" id="PRO_0000087848" description="Putative maleylacetate reductase 2">
    <location>
        <begin position="1"/>
        <end position="15" status="greater than"/>
    </location>
</feature>
<feature type="non-terminal residue">
    <location>
        <position position="15"/>
    </location>
</feature>
<dbReference type="EC" id="1.3.1.32"/>
<dbReference type="UniPathway" id="UPA00083"/>
<dbReference type="GO" id="GO:0018506">
    <property type="term" value="F:maleylacetate reductase activity"/>
    <property type="evidence" value="ECO:0007669"/>
    <property type="project" value="UniProtKB-EC"/>
</dbReference>
<dbReference type="GO" id="GO:0009056">
    <property type="term" value="P:catabolic process"/>
    <property type="evidence" value="ECO:0007669"/>
    <property type="project" value="UniProtKB-KW"/>
</dbReference>
<organism>
    <name type="scientific">Rhodococcus opacus</name>
    <name type="common">Nocardia opaca</name>
    <dbReference type="NCBI Taxonomy" id="37919"/>
    <lineage>
        <taxon>Bacteria</taxon>
        <taxon>Bacillati</taxon>
        <taxon>Actinomycetota</taxon>
        <taxon>Actinomycetes</taxon>
        <taxon>Mycobacteriales</taxon>
        <taxon>Nocardiaceae</taxon>
        <taxon>Rhodococcus</taxon>
    </lineage>
</organism>